<reference key="1">
    <citation type="journal article" date="2005" name="Proc. Natl. Acad. Sci. U.S.A.">
        <title>Comparison of the complete genome sequences of Pseudomonas syringae pv. syringae B728a and pv. tomato DC3000.</title>
        <authorList>
            <person name="Feil H."/>
            <person name="Feil W.S."/>
            <person name="Chain P."/>
            <person name="Larimer F."/>
            <person name="Dibartolo G."/>
            <person name="Copeland A."/>
            <person name="Lykidis A."/>
            <person name="Trong S."/>
            <person name="Nolan M."/>
            <person name="Goltsman E."/>
            <person name="Thiel J."/>
            <person name="Malfatti S."/>
            <person name="Loper J.E."/>
            <person name="Lapidus A."/>
            <person name="Detter J.C."/>
            <person name="Land M."/>
            <person name="Richardson P.M."/>
            <person name="Kyrpides N.C."/>
            <person name="Ivanova N."/>
            <person name="Lindow S.E."/>
        </authorList>
    </citation>
    <scope>NUCLEOTIDE SEQUENCE [LARGE SCALE GENOMIC DNA]</scope>
    <source>
        <strain>B728a</strain>
    </source>
</reference>
<sequence>MSREQLSLEIIEAGRFLYGRGWSPATSSNYSARLSASEALLTVSGKHKGQLGPDDVLATDLAGNSLEPGKKPSAETLLHTQLYSCRPQVGAVLHTHSVNATVLSRLTTADHLVFEDYELQKAFSGVVTHESQVVVPIFDNDQDIARLAAKVQPWLDTHPECAGYLIRGHGLYTWGAKMSDALRQIEAFEFLFECELKMRAVMNR</sequence>
<protein>
    <recommendedName>
        <fullName evidence="1">Methylthioribulose-1-phosphate dehydratase</fullName>
        <shortName evidence="1">MTRu-1-P dehydratase</shortName>
        <ecNumber evidence="1">4.2.1.109</ecNumber>
    </recommendedName>
</protein>
<comment type="function">
    <text evidence="1">Catalyzes the dehydration of methylthioribulose-1-phosphate (MTRu-1-P) into 2,3-diketo-5-methylthiopentyl-1-phosphate (DK-MTP-1-P).</text>
</comment>
<comment type="catalytic activity">
    <reaction evidence="1">
        <text>5-(methylsulfanyl)-D-ribulose 1-phosphate = 5-methylsulfanyl-2,3-dioxopentyl phosphate + H2O</text>
        <dbReference type="Rhea" id="RHEA:15549"/>
        <dbReference type="ChEBI" id="CHEBI:15377"/>
        <dbReference type="ChEBI" id="CHEBI:58548"/>
        <dbReference type="ChEBI" id="CHEBI:58828"/>
        <dbReference type="EC" id="4.2.1.109"/>
    </reaction>
</comment>
<comment type="cofactor">
    <cofactor evidence="1">
        <name>Zn(2+)</name>
        <dbReference type="ChEBI" id="CHEBI:29105"/>
    </cofactor>
    <text evidence="1">Binds 1 zinc ion per subunit.</text>
</comment>
<comment type="pathway">
    <text evidence="1">Amino-acid biosynthesis; L-methionine biosynthesis via salvage pathway; L-methionine from S-methyl-5-thio-alpha-D-ribose 1-phosphate: step 2/6.</text>
</comment>
<comment type="similarity">
    <text evidence="1">Belongs to the aldolase class II family. MtnB subfamily.</text>
</comment>
<accession>Q4ZVC0</accession>
<proteinExistence type="inferred from homology"/>
<gene>
    <name evidence="1" type="primary">mtnB</name>
    <name type="ordered locus">Psyr_1855</name>
</gene>
<organism>
    <name type="scientific">Pseudomonas syringae pv. syringae (strain B728a)</name>
    <dbReference type="NCBI Taxonomy" id="205918"/>
    <lineage>
        <taxon>Bacteria</taxon>
        <taxon>Pseudomonadati</taxon>
        <taxon>Pseudomonadota</taxon>
        <taxon>Gammaproteobacteria</taxon>
        <taxon>Pseudomonadales</taxon>
        <taxon>Pseudomonadaceae</taxon>
        <taxon>Pseudomonas</taxon>
        <taxon>Pseudomonas syringae</taxon>
    </lineage>
</organism>
<keyword id="KW-0028">Amino-acid biosynthesis</keyword>
<keyword id="KW-0456">Lyase</keyword>
<keyword id="KW-0479">Metal-binding</keyword>
<keyword id="KW-0486">Methionine biosynthesis</keyword>
<keyword id="KW-0862">Zinc</keyword>
<dbReference type="EC" id="4.2.1.109" evidence="1"/>
<dbReference type="EMBL" id="CP000075">
    <property type="protein sequence ID" value="AAY36902.1"/>
    <property type="molecule type" value="Genomic_DNA"/>
</dbReference>
<dbReference type="RefSeq" id="WP_003405783.1">
    <property type="nucleotide sequence ID" value="NC_007005.1"/>
</dbReference>
<dbReference type="RefSeq" id="YP_234940.1">
    <property type="nucleotide sequence ID" value="NC_007005.1"/>
</dbReference>
<dbReference type="SMR" id="Q4ZVC0"/>
<dbReference type="STRING" id="205918.Psyr_1855"/>
<dbReference type="KEGG" id="psb:Psyr_1855"/>
<dbReference type="PATRIC" id="fig|205918.7.peg.1899"/>
<dbReference type="eggNOG" id="COG0235">
    <property type="taxonomic scope" value="Bacteria"/>
</dbReference>
<dbReference type="HOGENOM" id="CLU_006033_4_1_6"/>
<dbReference type="OrthoDB" id="9805559at2"/>
<dbReference type="UniPathway" id="UPA00904">
    <property type="reaction ID" value="UER00875"/>
</dbReference>
<dbReference type="Proteomes" id="UP000000426">
    <property type="component" value="Chromosome"/>
</dbReference>
<dbReference type="GO" id="GO:0005737">
    <property type="term" value="C:cytoplasm"/>
    <property type="evidence" value="ECO:0007669"/>
    <property type="project" value="InterPro"/>
</dbReference>
<dbReference type="GO" id="GO:0046570">
    <property type="term" value="F:methylthioribulose 1-phosphate dehydratase activity"/>
    <property type="evidence" value="ECO:0007669"/>
    <property type="project" value="UniProtKB-UniRule"/>
</dbReference>
<dbReference type="GO" id="GO:0008270">
    <property type="term" value="F:zinc ion binding"/>
    <property type="evidence" value="ECO:0007669"/>
    <property type="project" value="UniProtKB-UniRule"/>
</dbReference>
<dbReference type="GO" id="GO:0019509">
    <property type="term" value="P:L-methionine salvage from methylthioadenosine"/>
    <property type="evidence" value="ECO:0007669"/>
    <property type="project" value="UniProtKB-UniRule"/>
</dbReference>
<dbReference type="GO" id="GO:0005996">
    <property type="term" value="P:monosaccharide metabolic process"/>
    <property type="evidence" value="ECO:0007669"/>
    <property type="project" value="UniProtKB-ARBA"/>
</dbReference>
<dbReference type="Gene3D" id="3.40.225.10">
    <property type="entry name" value="Class II aldolase/adducin N-terminal domain"/>
    <property type="match status" value="1"/>
</dbReference>
<dbReference type="HAMAP" id="MF_01677">
    <property type="entry name" value="Salvage_MtnB"/>
    <property type="match status" value="1"/>
</dbReference>
<dbReference type="InterPro" id="IPR001303">
    <property type="entry name" value="Aldolase_II/adducin_N"/>
</dbReference>
<dbReference type="InterPro" id="IPR036409">
    <property type="entry name" value="Aldolase_II/adducin_N_sf"/>
</dbReference>
<dbReference type="InterPro" id="IPR017714">
    <property type="entry name" value="MethylthioRu-1-P_deHdtase_MtnB"/>
</dbReference>
<dbReference type="NCBIfam" id="NF006672">
    <property type="entry name" value="PRK09220.1"/>
    <property type="match status" value="1"/>
</dbReference>
<dbReference type="NCBIfam" id="TIGR03328">
    <property type="entry name" value="salvage_mtnB"/>
    <property type="match status" value="1"/>
</dbReference>
<dbReference type="PANTHER" id="PTHR10640">
    <property type="entry name" value="METHYLTHIORIBULOSE-1-PHOSPHATE DEHYDRATASE"/>
    <property type="match status" value="1"/>
</dbReference>
<dbReference type="PANTHER" id="PTHR10640:SF7">
    <property type="entry name" value="METHYLTHIORIBULOSE-1-PHOSPHATE DEHYDRATASE"/>
    <property type="match status" value="1"/>
</dbReference>
<dbReference type="Pfam" id="PF00596">
    <property type="entry name" value="Aldolase_II"/>
    <property type="match status" value="1"/>
</dbReference>
<dbReference type="SMART" id="SM01007">
    <property type="entry name" value="Aldolase_II"/>
    <property type="match status" value="1"/>
</dbReference>
<dbReference type="SUPFAM" id="SSF53639">
    <property type="entry name" value="AraD/HMP-PK domain-like"/>
    <property type="match status" value="1"/>
</dbReference>
<feature type="chain" id="PRO_0000357102" description="Methylthioribulose-1-phosphate dehydratase">
    <location>
        <begin position="1"/>
        <end position="204"/>
    </location>
</feature>
<feature type="binding site" evidence="1">
    <location>
        <position position="94"/>
    </location>
    <ligand>
        <name>Zn(2+)</name>
        <dbReference type="ChEBI" id="CHEBI:29105"/>
    </ligand>
</feature>
<feature type="binding site" evidence="1">
    <location>
        <position position="96"/>
    </location>
    <ligand>
        <name>Zn(2+)</name>
        <dbReference type="ChEBI" id="CHEBI:29105"/>
    </ligand>
</feature>
<evidence type="ECO:0000255" key="1">
    <source>
        <dbReference type="HAMAP-Rule" id="MF_01677"/>
    </source>
</evidence>
<name>MTNB_PSEU2</name>